<gene>
    <name type="primary">tenA</name>
    <name type="ordered locus">SA1897</name>
</gene>
<protein>
    <recommendedName>
        <fullName evidence="1">Aminopyrimidine aminohydrolase</fullName>
        <ecNumber evidence="2">3.5.99.2</ecNumber>
    </recommendedName>
    <alternativeName>
        <fullName evidence="2">Thiaminase II</fullName>
    </alternativeName>
</protein>
<comment type="function">
    <text evidence="1 2">Catalyzes an amino-pyrimidine hydrolysis reaction at the C5' of the pyrimidine moiety of thiamine compounds, a reaction that is part of a thiamine salvage pathway. Thus, catalyzes the conversion of 4-amino-5-aminomethyl-2-methylpyrimidine to 4-amino-5-hydroxymethyl-2-methylpyrimidine (HMP). Is also able to catalyze the hydrolytic cleavage of thiamine; however, this thiaminase activity may not be physiologically relevant. Therefore, is probably involved in the regeneration of the thiamine pyrimidine from thiamine degraded products present in the environment, rather than in thiamine degradation.</text>
</comment>
<comment type="catalytic activity">
    <reaction evidence="1">
        <text>4-amino-5-aminomethyl-2-methylpyrimidine + H2O = 4-amino-5-hydroxymethyl-2-methylpyrimidine + NH4(+)</text>
        <dbReference type="Rhea" id="RHEA:31799"/>
        <dbReference type="ChEBI" id="CHEBI:15377"/>
        <dbReference type="ChEBI" id="CHEBI:16892"/>
        <dbReference type="ChEBI" id="CHEBI:28938"/>
        <dbReference type="ChEBI" id="CHEBI:63416"/>
        <dbReference type="EC" id="3.5.99.2"/>
    </reaction>
</comment>
<comment type="catalytic activity">
    <reaction evidence="2">
        <text>thiamine + H2O = 5-(2-hydroxyethyl)-4-methylthiazole + 4-amino-5-hydroxymethyl-2-methylpyrimidine + H(+)</text>
        <dbReference type="Rhea" id="RHEA:17509"/>
        <dbReference type="ChEBI" id="CHEBI:15377"/>
        <dbReference type="ChEBI" id="CHEBI:15378"/>
        <dbReference type="ChEBI" id="CHEBI:16892"/>
        <dbReference type="ChEBI" id="CHEBI:17957"/>
        <dbReference type="ChEBI" id="CHEBI:18385"/>
        <dbReference type="EC" id="3.5.99.2"/>
    </reaction>
</comment>
<comment type="pathway">
    <text evidence="1">Cofactor biosynthesis; thiamine diphosphate biosynthesis.</text>
</comment>
<comment type="subunit">
    <text evidence="2">Homotetramer.</text>
</comment>
<comment type="similarity">
    <text evidence="3">Belongs to the TenA family.</text>
</comment>
<feature type="chain" id="PRO_0000293611" description="Aminopyrimidine aminohydrolase">
    <location>
        <begin position="1"/>
        <end position="229"/>
    </location>
</feature>
<feature type="active site" description="Nucleophile" evidence="1">
    <location>
        <position position="137"/>
    </location>
</feature>
<feature type="active site" description="Proton donor" evidence="1">
    <location>
        <position position="208"/>
    </location>
</feature>
<feature type="binding site" evidence="1">
    <location>
        <position position="44"/>
    </location>
    <ligand>
        <name>substrate</name>
    </ligand>
</feature>
<feature type="binding site" evidence="1">
    <location>
        <position position="141"/>
    </location>
    <ligand>
        <name>substrate</name>
    </ligand>
</feature>
<feature type="binding site" evidence="1">
    <location>
        <position position="167"/>
    </location>
    <ligand>
        <name>substrate</name>
    </ligand>
</feature>
<feature type="site" description="Increases nucleophilicity of active site Cys" evidence="1">
    <location>
        <position position="47"/>
    </location>
</feature>
<evidence type="ECO:0000250" key="1">
    <source>
        <dbReference type="UniProtKB" id="P25052"/>
    </source>
</evidence>
<evidence type="ECO:0000250" key="2">
    <source>
        <dbReference type="UniProtKB" id="Q6GEY1"/>
    </source>
</evidence>
<evidence type="ECO:0000305" key="3"/>
<organism>
    <name type="scientific">Staphylococcus aureus (strain N315)</name>
    <dbReference type="NCBI Taxonomy" id="158879"/>
    <lineage>
        <taxon>Bacteria</taxon>
        <taxon>Bacillati</taxon>
        <taxon>Bacillota</taxon>
        <taxon>Bacilli</taxon>
        <taxon>Bacillales</taxon>
        <taxon>Staphylococcaceae</taxon>
        <taxon>Staphylococcus</taxon>
    </lineage>
</organism>
<keyword id="KW-0378">Hydrolase</keyword>
<keyword id="KW-0784">Thiamine biosynthesis</keyword>
<name>TENA_STAAN</name>
<accession>Q7A4F3</accession>
<dbReference type="EC" id="3.5.99.2" evidence="2"/>
<dbReference type="EMBL" id="BA000018">
    <property type="protein sequence ID" value="BAB43181.1"/>
    <property type="molecule type" value="Genomic_DNA"/>
</dbReference>
<dbReference type="PIR" id="D90002">
    <property type="entry name" value="D90002"/>
</dbReference>
<dbReference type="RefSeq" id="WP_000396077.1">
    <property type="nucleotide sequence ID" value="NC_002745.2"/>
</dbReference>
<dbReference type="SMR" id="Q7A4F3"/>
<dbReference type="EnsemblBacteria" id="BAB43181">
    <property type="protein sequence ID" value="BAB43181"/>
    <property type="gene ID" value="BAB43181"/>
</dbReference>
<dbReference type="KEGG" id="sau:SA1897"/>
<dbReference type="HOGENOM" id="CLU_077537_3_1_9"/>
<dbReference type="UniPathway" id="UPA00060"/>
<dbReference type="GO" id="GO:0005829">
    <property type="term" value="C:cytosol"/>
    <property type="evidence" value="ECO:0007669"/>
    <property type="project" value="TreeGrafter"/>
</dbReference>
<dbReference type="GO" id="GO:0050334">
    <property type="term" value="F:thiaminase activity"/>
    <property type="evidence" value="ECO:0007669"/>
    <property type="project" value="UniProtKB-EC"/>
</dbReference>
<dbReference type="GO" id="GO:0009228">
    <property type="term" value="P:thiamine biosynthetic process"/>
    <property type="evidence" value="ECO:0007669"/>
    <property type="project" value="UniProtKB-KW"/>
</dbReference>
<dbReference type="GO" id="GO:0009229">
    <property type="term" value="P:thiamine diphosphate biosynthetic process"/>
    <property type="evidence" value="ECO:0007669"/>
    <property type="project" value="UniProtKB-UniPathway"/>
</dbReference>
<dbReference type="CDD" id="cd19360">
    <property type="entry name" value="TenA_C_SaTenA-like"/>
    <property type="match status" value="1"/>
</dbReference>
<dbReference type="FunFam" id="1.20.910.10:FF:000010">
    <property type="entry name" value="Aminopyrimidine aminohydrolase"/>
    <property type="match status" value="1"/>
</dbReference>
<dbReference type="Gene3D" id="1.20.910.10">
    <property type="entry name" value="Heme oxygenase-like"/>
    <property type="match status" value="1"/>
</dbReference>
<dbReference type="InterPro" id="IPR016084">
    <property type="entry name" value="Haem_Oase-like_multi-hlx"/>
</dbReference>
<dbReference type="InterPro" id="IPR004305">
    <property type="entry name" value="Thiaminase-2/PQQC"/>
</dbReference>
<dbReference type="InterPro" id="IPR027574">
    <property type="entry name" value="Thiaminase_II"/>
</dbReference>
<dbReference type="InterPro" id="IPR050967">
    <property type="entry name" value="Thiamine_Salvage_TenA"/>
</dbReference>
<dbReference type="NCBIfam" id="TIGR04306">
    <property type="entry name" value="salvage_TenA"/>
    <property type="match status" value="1"/>
</dbReference>
<dbReference type="PANTHER" id="PTHR43198">
    <property type="entry name" value="BIFUNCTIONAL TH2 PROTEIN"/>
    <property type="match status" value="1"/>
</dbReference>
<dbReference type="PANTHER" id="PTHR43198:SF2">
    <property type="entry name" value="SI:CH1073-67J19.1-RELATED"/>
    <property type="match status" value="1"/>
</dbReference>
<dbReference type="Pfam" id="PF03070">
    <property type="entry name" value="TENA_THI-4"/>
    <property type="match status" value="1"/>
</dbReference>
<dbReference type="SUPFAM" id="SSF48613">
    <property type="entry name" value="Heme oxygenase-like"/>
    <property type="match status" value="1"/>
</dbReference>
<sequence>MEFSQKLYQAAKPIINDIYEDDFIQKMLSGDIGADALRHYLKADAAYLKEFTNLYALLIPKMNSMNDVKFLVEQIEFMVEGEVLAHDILAQIVGESYEEIIKTKVWPPSGDHYIKHMYFQAHSRENAIYTIAAMAPCPYIYAELAKRSQSDHKLNREKDTAKWFDFYSTEMDDIINVFEALMNKLAESMSDKELEQVKQVFLESCIHERRFFNMAMTLEQWEFGGKVND</sequence>
<reference key="1">
    <citation type="journal article" date="2001" name="Lancet">
        <title>Whole genome sequencing of meticillin-resistant Staphylococcus aureus.</title>
        <authorList>
            <person name="Kuroda M."/>
            <person name="Ohta T."/>
            <person name="Uchiyama I."/>
            <person name="Baba T."/>
            <person name="Yuzawa H."/>
            <person name="Kobayashi I."/>
            <person name="Cui L."/>
            <person name="Oguchi A."/>
            <person name="Aoki K."/>
            <person name="Nagai Y."/>
            <person name="Lian J.-Q."/>
            <person name="Ito T."/>
            <person name="Kanamori M."/>
            <person name="Matsumaru H."/>
            <person name="Maruyama A."/>
            <person name="Murakami H."/>
            <person name="Hosoyama A."/>
            <person name="Mizutani-Ui Y."/>
            <person name="Takahashi N.K."/>
            <person name="Sawano T."/>
            <person name="Inoue R."/>
            <person name="Kaito C."/>
            <person name="Sekimizu K."/>
            <person name="Hirakawa H."/>
            <person name="Kuhara S."/>
            <person name="Goto S."/>
            <person name="Yabuzaki J."/>
            <person name="Kanehisa M."/>
            <person name="Yamashita A."/>
            <person name="Oshima K."/>
            <person name="Furuya K."/>
            <person name="Yoshino C."/>
            <person name="Shiba T."/>
            <person name="Hattori M."/>
            <person name="Ogasawara N."/>
            <person name="Hayashi H."/>
            <person name="Hiramatsu K."/>
        </authorList>
    </citation>
    <scope>NUCLEOTIDE SEQUENCE [LARGE SCALE GENOMIC DNA]</scope>
    <source>
        <strain>N315</strain>
    </source>
</reference>
<reference key="2">
    <citation type="submission" date="2005-11" db="UniProtKB">
        <title>Shotgun proteomic analysis of total protein extract of S. aureus S30 versus N315.</title>
        <authorList>
            <person name="Stenz L."/>
        </authorList>
    </citation>
    <scope>IDENTIFICATION BY MASS SPECTROMETRY</scope>
</reference>
<reference key="3">
    <citation type="submission" date="2007-10" db="UniProtKB">
        <title>Shotgun proteomic analysis of total and membrane protein extracts of S. aureus strain N315.</title>
        <authorList>
            <person name="Vaezzadeh A.R."/>
            <person name="Deshusses J."/>
            <person name="Lescuyer P."/>
            <person name="Hochstrasser D.F."/>
        </authorList>
    </citation>
    <scope>IDENTIFICATION BY MASS SPECTROMETRY [LARGE SCALE ANALYSIS]</scope>
    <source>
        <strain>N315</strain>
    </source>
</reference>
<proteinExistence type="evidence at protein level"/>